<protein>
    <recommendedName>
        <fullName evidence="1">3-dehydroquinate synthase</fullName>
        <shortName evidence="1">DHQS</shortName>
        <ecNumber evidence="1">4.2.3.4</ecNumber>
    </recommendedName>
</protein>
<organism>
    <name type="scientific">Citrobacter koseri (strain ATCC BAA-895 / CDC 4225-83 / SGSC4696)</name>
    <dbReference type="NCBI Taxonomy" id="290338"/>
    <lineage>
        <taxon>Bacteria</taxon>
        <taxon>Pseudomonadati</taxon>
        <taxon>Pseudomonadota</taxon>
        <taxon>Gammaproteobacteria</taxon>
        <taxon>Enterobacterales</taxon>
        <taxon>Enterobacteriaceae</taxon>
        <taxon>Citrobacter</taxon>
    </lineage>
</organism>
<gene>
    <name evidence="1" type="primary">aroB</name>
    <name type="ordered locus">CKO_04811</name>
</gene>
<keyword id="KW-0028">Amino-acid biosynthesis</keyword>
<keyword id="KW-0057">Aromatic amino acid biosynthesis</keyword>
<keyword id="KW-0170">Cobalt</keyword>
<keyword id="KW-0963">Cytoplasm</keyword>
<keyword id="KW-0456">Lyase</keyword>
<keyword id="KW-0479">Metal-binding</keyword>
<keyword id="KW-0520">NAD</keyword>
<keyword id="KW-0547">Nucleotide-binding</keyword>
<keyword id="KW-1185">Reference proteome</keyword>
<keyword id="KW-0862">Zinc</keyword>
<proteinExistence type="inferred from homology"/>
<sequence>MERITVTLGERSYPITIAAGLFNEPASFLPLKSGDQVMLVTNETLAPLYLDKIRSVLEQAGVNVDSVTLPDGEKYKSLTVLDTVFTALLQKPHGRDTTLVALGGGVIGDLTGFAAASYQRGVRFIQVPTTLLSQVDSSVGGKTAVNHPLGKNMIGAFYQPASVVVDLDCLKTLPARELASGLAEVIKYGIILDGEFFTWLEDNLDALLRLEGPAMAYCIRRCCELKAEVVAADERETGLRALLNLGHTFGHAIEAEMGYGNWLHGEAVAAGMVMAARTSERLGQFSAADTQRIITLLQRAGLPVHGPREMSAQAYLPHMLRDKKVLAGEMRLVLPLAIGKSEVRGGVPHEIVLSAIADCQQA</sequence>
<accession>A8AQU3</accession>
<name>AROB_CITK8</name>
<feature type="chain" id="PRO_1000094488" description="3-dehydroquinate synthase">
    <location>
        <begin position="1"/>
        <end position="362"/>
    </location>
</feature>
<feature type="binding site" evidence="1">
    <location>
        <begin position="71"/>
        <end position="76"/>
    </location>
    <ligand>
        <name>NAD(+)</name>
        <dbReference type="ChEBI" id="CHEBI:57540"/>
    </ligand>
</feature>
<feature type="binding site" evidence="1">
    <location>
        <begin position="105"/>
        <end position="109"/>
    </location>
    <ligand>
        <name>NAD(+)</name>
        <dbReference type="ChEBI" id="CHEBI:57540"/>
    </ligand>
</feature>
<feature type="binding site" evidence="1">
    <location>
        <begin position="129"/>
        <end position="130"/>
    </location>
    <ligand>
        <name>NAD(+)</name>
        <dbReference type="ChEBI" id="CHEBI:57540"/>
    </ligand>
</feature>
<feature type="binding site" evidence="1">
    <location>
        <position position="142"/>
    </location>
    <ligand>
        <name>NAD(+)</name>
        <dbReference type="ChEBI" id="CHEBI:57540"/>
    </ligand>
</feature>
<feature type="binding site" evidence="1">
    <location>
        <position position="151"/>
    </location>
    <ligand>
        <name>NAD(+)</name>
        <dbReference type="ChEBI" id="CHEBI:57540"/>
    </ligand>
</feature>
<feature type="binding site" evidence="1">
    <location>
        <begin position="169"/>
        <end position="172"/>
    </location>
    <ligand>
        <name>NAD(+)</name>
        <dbReference type="ChEBI" id="CHEBI:57540"/>
    </ligand>
</feature>
<feature type="binding site" evidence="1">
    <location>
        <position position="184"/>
    </location>
    <ligand>
        <name>Zn(2+)</name>
        <dbReference type="ChEBI" id="CHEBI:29105"/>
    </ligand>
</feature>
<feature type="binding site" evidence="1">
    <location>
        <position position="247"/>
    </location>
    <ligand>
        <name>Zn(2+)</name>
        <dbReference type="ChEBI" id="CHEBI:29105"/>
    </ligand>
</feature>
<feature type="binding site" evidence="1">
    <location>
        <position position="264"/>
    </location>
    <ligand>
        <name>Zn(2+)</name>
        <dbReference type="ChEBI" id="CHEBI:29105"/>
    </ligand>
</feature>
<comment type="function">
    <text evidence="1">Catalyzes the conversion of 3-deoxy-D-arabino-heptulosonate 7-phosphate (DAHP) to dehydroquinate (DHQ).</text>
</comment>
<comment type="catalytic activity">
    <reaction evidence="1">
        <text>7-phospho-2-dehydro-3-deoxy-D-arabino-heptonate = 3-dehydroquinate + phosphate</text>
        <dbReference type="Rhea" id="RHEA:21968"/>
        <dbReference type="ChEBI" id="CHEBI:32364"/>
        <dbReference type="ChEBI" id="CHEBI:43474"/>
        <dbReference type="ChEBI" id="CHEBI:58394"/>
        <dbReference type="EC" id="4.2.3.4"/>
    </reaction>
</comment>
<comment type="cofactor">
    <cofactor evidence="1">
        <name>Co(2+)</name>
        <dbReference type="ChEBI" id="CHEBI:48828"/>
    </cofactor>
    <cofactor evidence="1">
        <name>Zn(2+)</name>
        <dbReference type="ChEBI" id="CHEBI:29105"/>
    </cofactor>
    <text evidence="1">Binds 1 divalent metal cation per subunit. Can use either Co(2+) or Zn(2+).</text>
</comment>
<comment type="cofactor">
    <cofactor evidence="1">
        <name>NAD(+)</name>
        <dbReference type="ChEBI" id="CHEBI:57540"/>
    </cofactor>
</comment>
<comment type="pathway">
    <text evidence="1">Metabolic intermediate biosynthesis; chorismate biosynthesis; chorismate from D-erythrose 4-phosphate and phosphoenolpyruvate: step 2/7.</text>
</comment>
<comment type="subcellular location">
    <subcellularLocation>
        <location evidence="1">Cytoplasm</location>
    </subcellularLocation>
</comment>
<comment type="similarity">
    <text evidence="1">Belongs to the sugar phosphate cyclases superfamily. Dehydroquinate synthase family.</text>
</comment>
<dbReference type="EC" id="4.2.3.4" evidence="1"/>
<dbReference type="EMBL" id="CP000822">
    <property type="protein sequence ID" value="ABV15856.1"/>
    <property type="molecule type" value="Genomic_DNA"/>
</dbReference>
<dbReference type="RefSeq" id="WP_012135497.1">
    <property type="nucleotide sequence ID" value="NC_009792.1"/>
</dbReference>
<dbReference type="SMR" id="A8AQU3"/>
<dbReference type="STRING" id="290338.CKO_04811"/>
<dbReference type="GeneID" id="45138312"/>
<dbReference type="KEGG" id="cko:CKO_04811"/>
<dbReference type="HOGENOM" id="CLU_001201_0_2_6"/>
<dbReference type="OrthoDB" id="9806583at2"/>
<dbReference type="UniPathway" id="UPA00053">
    <property type="reaction ID" value="UER00085"/>
</dbReference>
<dbReference type="Proteomes" id="UP000008148">
    <property type="component" value="Chromosome"/>
</dbReference>
<dbReference type="GO" id="GO:0005737">
    <property type="term" value="C:cytoplasm"/>
    <property type="evidence" value="ECO:0007669"/>
    <property type="project" value="UniProtKB-SubCell"/>
</dbReference>
<dbReference type="GO" id="GO:0003856">
    <property type="term" value="F:3-dehydroquinate synthase activity"/>
    <property type="evidence" value="ECO:0007669"/>
    <property type="project" value="UniProtKB-UniRule"/>
</dbReference>
<dbReference type="GO" id="GO:0046872">
    <property type="term" value="F:metal ion binding"/>
    <property type="evidence" value="ECO:0007669"/>
    <property type="project" value="UniProtKB-KW"/>
</dbReference>
<dbReference type="GO" id="GO:0000166">
    <property type="term" value="F:nucleotide binding"/>
    <property type="evidence" value="ECO:0007669"/>
    <property type="project" value="UniProtKB-KW"/>
</dbReference>
<dbReference type="GO" id="GO:0008652">
    <property type="term" value="P:amino acid biosynthetic process"/>
    <property type="evidence" value="ECO:0007669"/>
    <property type="project" value="UniProtKB-KW"/>
</dbReference>
<dbReference type="GO" id="GO:0009073">
    <property type="term" value="P:aromatic amino acid family biosynthetic process"/>
    <property type="evidence" value="ECO:0007669"/>
    <property type="project" value="UniProtKB-KW"/>
</dbReference>
<dbReference type="GO" id="GO:0009423">
    <property type="term" value="P:chorismate biosynthetic process"/>
    <property type="evidence" value="ECO:0007669"/>
    <property type="project" value="UniProtKB-UniRule"/>
</dbReference>
<dbReference type="CDD" id="cd08195">
    <property type="entry name" value="DHQS"/>
    <property type="match status" value="1"/>
</dbReference>
<dbReference type="FunFam" id="1.20.1090.10:FF:000002">
    <property type="entry name" value="3-dehydroquinate synthase"/>
    <property type="match status" value="1"/>
</dbReference>
<dbReference type="FunFam" id="3.40.50.1970:FF:000001">
    <property type="entry name" value="3-dehydroquinate synthase"/>
    <property type="match status" value="1"/>
</dbReference>
<dbReference type="Gene3D" id="3.40.50.1970">
    <property type="match status" value="1"/>
</dbReference>
<dbReference type="Gene3D" id="1.20.1090.10">
    <property type="entry name" value="Dehydroquinate synthase-like - alpha domain"/>
    <property type="match status" value="1"/>
</dbReference>
<dbReference type="HAMAP" id="MF_00110">
    <property type="entry name" value="DHQ_synthase"/>
    <property type="match status" value="1"/>
</dbReference>
<dbReference type="InterPro" id="IPR050071">
    <property type="entry name" value="Dehydroquinate_synthase"/>
</dbReference>
<dbReference type="InterPro" id="IPR016037">
    <property type="entry name" value="DHQ_synth_AroB"/>
</dbReference>
<dbReference type="InterPro" id="IPR030963">
    <property type="entry name" value="DHQ_synth_fam"/>
</dbReference>
<dbReference type="InterPro" id="IPR030960">
    <property type="entry name" value="DHQS/DOIS_N"/>
</dbReference>
<dbReference type="InterPro" id="IPR056179">
    <property type="entry name" value="DHQS_C"/>
</dbReference>
<dbReference type="NCBIfam" id="TIGR01357">
    <property type="entry name" value="aroB"/>
    <property type="match status" value="1"/>
</dbReference>
<dbReference type="PANTHER" id="PTHR43622">
    <property type="entry name" value="3-DEHYDROQUINATE SYNTHASE"/>
    <property type="match status" value="1"/>
</dbReference>
<dbReference type="PANTHER" id="PTHR43622:SF7">
    <property type="entry name" value="3-DEHYDROQUINATE SYNTHASE, CHLOROPLASTIC"/>
    <property type="match status" value="1"/>
</dbReference>
<dbReference type="Pfam" id="PF01761">
    <property type="entry name" value="DHQ_synthase"/>
    <property type="match status" value="1"/>
</dbReference>
<dbReference type="Pfam" id="PF24621">
    <property type="entry name" value="DHQS_C"/>
    <property type="match status" value="1"/>
</dbReference>
<dbReference type="PIRSF" id="PIRSF001455">
    <property type="entry name" value="DHQ_synth"/>
    <property type="match status" value="1"/>
</dbReference>
<dbReference type="SUPFAM" id="SSF56796">
    <property type="entry name" value="Dehydroquinate synthase-like"/>
    <property type="match status" value="1"/>
</dbReference>
<evidence type="ECO:0000255" key="1">
    <source>
        <dbReference type="HAMAP-Rule" id="MF_00110"/>
    </source>
</evidence>
<reference key="1">
    <citation type="submission" date="2007-08" db="EMBL/GenBank/DDBJ databases">
        <authorList>
            <consortium name="The Citrobacter koseri Genome Sequencing Project"/>
            <person name="McClelland M."/>
            <person name="Sanderson E.K."/>
            <person name="Porwollik S."/>
            <person name="Spieth J."/>
            <person name="Clifton W.S."/>
            <person name="Latreille P."/>
            <person name="Courtney L."/>
            <person name="Wang C."/>
            <person name="Pepin K."/>
            <person name="Bhonagiri V."/>
            <person name="Nash W."/>
            <person name="Johnson M."/>
            <person name="Thiruvilangam P."/>
            <person name="Wilson R."/>
        </authorList>
    </citation>
    <scope>NUCLEOTIDE SEQUENCE [LARGE SCALE GENOMIC DNA]</scope>
    <source>
        <strain>ATCC BAA-895 / CDC 4225-83 / SGSC4696</strain>
    </source>
</reference>